<reference key="1">
    <citation type="journal article" date="2006" name="J. Bacteriol.">
        <title>Genome sequence of Aeromonas hydrophila ATCC 7966T: jack of all trades.</title>
        <authorList>
            <person name="Seshadri R."/>
            <person name="Joseph S.W."/>
            <person name="Chopra A.K."/>
            <person name="Sha J."/>
            <person name="Shaw J."/>
            <person name="Graf J."/>
            <person name="Haft D.H."/>
            <person name="Wu M."/>
            <person name="Ren Q."/>
            <person name="Rosovitz M.J."/>
            <person name="Madupu R."/>
            <person name="Tallon L."/>
            <person name="Kim M."/>
            <person name="Jin S."/>
            <person name="Vuong H."/>
            <person name="Stine O.C."/>
            <person name="Ali A."/>
            <person name="Horneman A.J."/>
            <person name="Heidelberg J.F."/>
        </authorList>
    </citation>
    <scope>NUCLEOTIDE SEQUENCE [LARGE SCALE GENOMIC DNA]</scope>
    <source>
        <strain>ATCC 7966 / DSM 30187 / BCRC 13018 / CCUG 14551 / JCM 1027 / KCTC 2358 / NCIMB 9240 / NCTC 8049</strain>
    </source>
</reference>
<sequence length="212" mass="23486">MENTEKLKNSKEIVAYLVEKFPACFIAEGEAKPLKIGIFQDLAERLADDARVSKTMLRSALRQYTSSWRYLHGLKAGQARVDLDGNPGELLTEEHIEHAKQALKESKERVFASRRTNTKEEKAKQPRRPAPRKADAAAKSDKPKAAPKAAPVAVEAPLVKVDAATLKVDQGVRVVLGKSPVPATIKEVTKDDVQVQLQTGMMLRVKFEHLVL</sequence>
<comment type="function">
    <text evidence="1">RNA chaperone with significant RNA binding, RNA strand exchange and RNA duplexing activities.</text>
</comment>
<comment type="subcellular location">
    <subcellularLocation>
        <location evidence="1">Cytoplasm</location>
    </subcellularLocation>
</comment>
<comment type="similarity">
    <text evidence="1">Belongs to the ProQ family.</text>
</comment>
<feature type="chain" id="PRO_0000303085" description="RNA chaperone ProQ">
    <location>
        <begin position="1"/>
        <end position="212"/>
    </location>
</feature>
<feature type="region of interest" description="Disordered" evidence="2">
    <location>
        <begin position="102"/>
        <end position="149"/>
    </location>
</feature>
<feature type="compositionally biased region" description="Basic and acidic residues" evidence="2">
    <location>
        <begin position="102"/>
        <end position="124"/>
    </location>
</feature>
<feature type="compositionally biased region" description="Basic and acidic residues" evidence="2">
    <location>
        <begin position="132"/>
        <end position="144"/>
    </location>
</feature>
<keyword id="KW-0143">Chaperone</keyword>
<keyword id="KW-0963">Cytoplasm</keyword>
<keyword id="KW-1185">Reference proteome</keyword>
<keyword id="KW-0694">RNA-binding</keyword>
<proteinExistence type="inferred from homology"/>
<dbReference type="EMBL" id="CP000462">
    <property type="protein sequence ID" value="ABK39172.1"/>
    <property type="molecule type" value="Genomic_DNA"/>
</dbReference>
<dbReference type="RefSeq" id="WP_011706143.1">
    <property type="nucleotide sequence ID" value="NC_008570.1"/>
</dbReference>
<dbReference type="RefSeq" id="YP_856815.1">
    <property type="nucleotide sequence ID" value="NC_008570.1"/>
</dbReference>
<dbReference type="SMR" id="A0KKL4"/>
<dbReference type="STRING" id="380703.AHA_2292"/>
<dbReference type="EnsemblBacteria" id="ABK39172">
    <property type="protein sequence ID" value="ABK39172"/>
    <property type="gene ID" value="AHA_2292"/>
</dbReference>
<dbReference type="GeneID" id="4490729"/>
<dbReference type="KEGG" id="aha:AHA_2292"/>
<dbReference type="PATRIC" id="fig|380703.7.peg.2292"/>
<dbReference type="eggNOG" id="COG3109">
    <property type="taxonomic scope" value="Bacteria"/>
</dbReference>
<dbReference type="HOGENOM" id="CLU_113254_0_0_6"/>
<dbReference type="OrthoDB" id="8421419at2"/>
<dbReference type="Proteomes" id="UP000000756">
    <property type="component" value="Chromosome"/>
</dbReference>
<dbReference type="GO" id="GO:0005829">
    <property type="term" value="C:cytosol"/>
    <property type="evidence" value="ECO:0007669"/>
    <property type="project" value="TreeGrafter"/>
</dbReference>
<dbReference type="GO" id="GO:0033592">
    <property type="term" value="F:RNA strand annealing activity"/>
    <property type="evidence" value="ECO:0007669"/>
    <property type="project" value="UniProtKB-UniRule"/>
</dbReference>
<dbReference type="GO" id="GO:0034057">
    <property type="term" value="F:RNA strand-exchange activity"/>
    <property type="evidence" value="ECO:0007669"/>
    <property type="project" value="UniProtKB-UniRule"/>
</dbReference>
<dbReference type="GO" id="GO:0010608">
    <property type="term" value="P:post-transcriptional regulation of gene expression"/>
    <property type="evidence" value="ECO:0007669"/>
    <property type="project" value="InterPro"/>
</dbReference>
<dbReference type="FunFam" id="1.10.1710.10:FF:000001">
    <property type="entry name" value="RNA chaperone ProQ"/>
    <property type="match status" value="1"/>
</dbReference>
<dbReference type="Gene3D" id="1.10.1710.10">
    <property type="entry name" value="ProQ/FinO domain"/>
    <property type="match status" value="1"/>
</dbReference>
<dbReference type="HAMAP" id="MF_00749">
    <property type="entry name" value="ProQ"/>
    <property type="match status" value="1"/>
</dbReference>
<dbReference type="InterPro" id="IPR023529">
    <property type="entry name" value="ProQ"/>
</dbReference>
<dbReference type="InterPro" id="IPR016103">
    <property type="entry name" value="ProQ/FinO"/>
</dbReference>
<dbReference type="InterPro" id="IPR036442">
    <property type="entry name" value="ProQ/FinO_sf"/>
</dbReference>
<dbReference type="InterPro" id="IPR035236">
    <property type="entry name" value="ProQ_C"/>
</dbReference>
<dbReference type="NCBIfam" id="NF003434">
    <property type="entry name" value="PRK04950.1"/>
    <property type="match status" value="1"/>
</dbReference>
<dbReference type="PANTHER" id="PTHR38106">
    <property type="entry name" value="RNA CHAPERONE PROQ"/>
    <property type="match status" value="1"/>
</dbReference>
<dbReference type="PANTHER" id="PTHR38106:SF1">
    <property type="entry name" value="RNA CHAPERONE PROQ"/>
    <property type="match status" value="1"/>
</dbReference>
<dbReference type="Pfam" id="PF04352">
    <property type="entry name" value="ProQ"/>
    <property type="match status" value="1"/>
</dbReference>
<dbReference type="Pfam" id="PF17516">
    <property type="entry name" value="ProQ_C"/>
    <property type="match status" value="1"/>
</dbReference>
<dbReference type="SMART" id="SM00945">
    <property type="entry name" value="ProQ"/>
    <property type="match status" value="1"/>
</dbReference>
<dbReference type="SUPFAM" id="SSF48657">
    <property type="entry name" value="FinO-like"/>
    <property type="match status" value="1"/>
</dbReference>
<evidence type="ECO:0000255" key="1">
    <source>
        <dbReference type="HAMAP-Rule" id="MF_00749"/>
    </source>
</evidence>
<evidence type="ECO:0000256" key="2">
    <source>
        <dbReference type="SAM" id="MobiDB-lite"/>
    </source>
</evidence>
<organism>
    <name type="scientific">Aeromonas hydrophila subsp. hydrophila (strain ATCC 7966 / DSM 30187 / BCRC 13018 / CCUG 14551 / JCM 1027 / KCTC 2358 / NCIMB 9240 / NCTC 8049)</name>
    <dbReference type="NCBI Taxonomy" id="380703"/>
    <lineage>
        <taxon>Bacteria</taxon>
        <taxon>Pseudomonadati</taxon>
        <taxon>Pseudomonadota</taxon>
        <taxon>Gammaproteobacteria</taxon>
        <taxon>Aeromonadales</taxon>
        <taxon>Aeromonadaceae</taxon>
        <taxon>Aeromonas</taxon>
    </lineage>
</organism>
<gene>
    <name evidence="1" type="primary">proQ</name>
    <name type="ordered locus">AHA_2292</name>
</gene>
<name>PROQ_AERHH</name>
<accession>A0KKL4</accession>
<protein>
    <recommendedName>
        <fullName evidence="1">RNA chaperone ProQ</fullName>
    </recommendedName>
</protein>